<reference key="1">
    <citation type="journal article" date="2006" name="Nat. Biotechnol.">
        <title>Genome sequence of the bioplastic-producing 'Knallgas' bacterium Ralstonia eutropha H16.</title>
        <authorList>
            <person name="Pohlmann A."/>
            <person name="Fricke W.F."/>
            <person name="Reinecke F."/>
            <person name="Kusian B."/>
            <person name="Liesegang H."/>
            <person name="Cramm R."/>
            <person name="Eitinger T."/>
            <person name="Ewering C."/>
            <person name="Poetter M."/>
            <person name="Schwartz E."/>
            <person name="Strittmatter A."/>
            <person name="Voss I."/>
            <person name="Gottschalk G."/>
            <person name="Steinbuechel A."/>
            <person name="Friedrich B."/>
            <person name="Bowien B."/>
        </authorList>
    </citation>
    <scope>NUCLEOTIDE SEQUENCE [LARGE SCALE GENOMIC DNA]</scope>
    <source>
        <strain>ATCC 17699 / DSM 428 / KCTC 22496 / NCIMB 10442 / H16 / Stanier 337</strain>
    </source>
</reference>
<accession>Q0K705</accession>
<evidence type="ECO:0000255" key="1">
    <source>
        <dbReference type="HAMAP-Rule" id="MF_00102"/>
    </source>
</evidence>
<evidence type="ECO:0000305" key="2"/>
<protein>
    <recommendedName>
        <fullName evidence="1">4-hydroxy-tetrahydrodipicolinate reductase</fullName>
        <shortName evidence="1">HTPA reductase</shortName>
        <ecNumber evidence="1">1.17.1.8</ecNumber>
    </recommendedName>
</protein>
<feature type="chain" id="PRO_1000008616" description="4-hydroxy-tetrahydrodipicolinate reductase">
    <location>
        <begin position="1"/>
        <end position="265"/>
    </location>
</feature>
<feature type="active site" description="Proton donor/acceptor" evidence="1">
    <location>
        <position position="153"/>
    </location>
</feature>
<feature type="active site" description="Proton donor" evidence="1">
    <location>
        <position position="157"/>
    </location>
</feature>
<feature type="binding site" evidence="1">
    <location>
        <begin position="7"/>
        <end position="12"/>
    </location>
    <ligand>
        <name>NAD(+)</name>
        <dbReference type="ChEBI" id="CHEBI:57540"/>
    </ligand>
</feature>
<feature type="binding site" evidence="1">
    <location>
        <position position="33"/>
    </location>
    <ligand>
        <name>NAD(+)</name>
        <dbReference type="ChEBI" id="CHEBI:57540"/>
    </ligand>
</feature>
<feature type="binding site" evidence="1">
    <location>
        <begin position="96"/>
        <end position="98"/>
    </location>
    <ligand>
        <name>NAD(+)</name>
        <dbReference type="ChEBI" id="CHEBI:57540"/>
    </ligand>
</feature>
<feature type="binding site" evidence="1">
    <location>
        <begin position="120"/>
        <end position="123"/>
    </location>
    <ligand>
        <name>NAD(+)</name>
        <dbReference type="ChEBI" id="CHEBI:57540"/>
    </ligand>
</feature>
<feature type="binding site" evidence="1">
    <location>
        <position position="154"/>
    </location>
    <ligand>
        <name>(S)-2,3,4,5-tetrahydrodipicolinate</name>
        <dbReference type="ChEBI" id="CHEBI:16845"/>
    </ligand>
</feature>
<feature type="binding site" evidence="1">
    <location>
        <begin position="163"/>
        <end position="164"/>
    </location>
    <ligand>
        <name>(S)-2,3,4,5-tetrahydrodipicolinate</name>
        <dbReference type="ChEBI" id="CHEBI:16845"/>
    </ligand>
</feature>
<name>DAPB_CUPNH</name>
<comment type="function">
    <text evidence="1">Catalyzes the conversion of 4-hydroxy-tetrahydrodipicolinate (HTPA) to tetrahydrodipicolinate.</text>
</comment>
<comment type="catalytic activity">
    <reaction evidence="1">
        <text>(S)-2,3,4,5-tetrahydrodipicolinate + NAD(+) + H2O = (2S,4S)-4-hydroxy-2,3,4,5-tetrahydrodipicolinate + NADH + H(+)</text>
        <dbReference type="Rhea" id="RHEA:35323"/>
        <dbReference type="ChEBI" id="CHEBI:15377"/>
        <dbReference type="ChEBI" id="CHEBI:15378"/>
        <dbReference type="ChEBI" id="CHEBI:16845"/>
        <dbReference type="ChEBI" id="CHEBI:57540"/>
        <dbReference type="ChEBI" id="CHEBI:57945"/>
        <dbReference type="ChEBI" id="CHEBI:67139"/>
        <dbReference type="EC" id="1.17.1.8"/>
    </reaction>
</comment>
<comment type="catalytic activity">
    <reaction evidence="1">
        <text>(S)-2,3,4,5-tetrahydrodipicolinate + NADP(+) + H2O = (2S,4S)-4-hydroxy-2,3,4,5-tetrahydrodipicolinate + NADPH + H(+)</text>
        <dbReference type="Rhea" id="RHEA:35331"/>
        <dbReference type="ChEBI" id="CHEBI:15377"/>
        <dbReference type="ChEBI" id="CHEBI:15378"/>
        <dbReference type="ChEBI" id="CHEBI:16845"/>
        <dbReference type="ChEBI" id="CHEBI:57783"/>
        <dbReference type="ChEBI" id="CHEBI:58349"/>
        <dbReference type="ChEBI" id="CHEBI:67139"/>
        <dbReference type="EC" id="1.17.1.8"/>
    </reaction>
</comment>
<comment type="pathway">
    <text evidence="1">Amino-acid biosynthesis; L-lysine biosynthesis via DAP pathway; (S)-tetrahydrodipicolinate from L-aspartate: step 4/4.</text>
</comment>
<comment type="subcellular location">
    <subcellularLocation>
        <location evidence="1">Cytoplasm</location>
    </subcellularLocation>
</comment>
<comment type="similarity">
    <text evidence="1">Belongs to the DapB family.</text>
</comment>
<comment type="caution">
    <text evidence="2">Was originally thought to be a dihydrodipicolinate reductase (DHDPR), catalyzing the conversion of dihydrodipicolinate to tetrahydrodipicolinate. However, it was shown in E.coli that the substrate of the enzymatic reaction is not dihydrodipicolinate (DHDP) but in fact (2S,4S)-4-hydroxy-2,3,4,5-tetrahydrodipicolinic acid (HTPA), the product released by the DapA-catalyzed reaction.</text>
</comment>
<gene>
    <name evidence="1" type="primary">dapB</name>
    <name type="ordered locus">H16_A3141</name>
</gene>
<proteinExistence type="inferred from homology"/>
<sequence length="265" mass="27404">MNIAIAGASGRMGRMLIEQVLNTEGVSLAGALDVPGSPALGQDAGLLLGRQTGVAISSDVEAVLAGADCLIDFTRPEGTLAHVAAAKKLGVKMVIGTTGFDEAGKAALAEAARSIGIVFAANFSVGVNATFKLLEVAARLLSTGYDIEVIEAHHRFKVDAPSGTALKMGEVIADALGRDLKTCAVYAREGHTGERNPNSIGFATVRGGDIVGDHTVMFAGIGERIEISHKSSSRQSYADGAVRAARFLADKPNGLFDMQDVLGLK</sequence>
<dbReference type="EC" id="1.17.1.8" evidence="1"/>
<dbReference type="EMBL" id="AM260479">
    <property type="protein sequence ID" value="CAJ94216.1"/>
    <property type="molecule type" value="Genomic_DNA"/>
</dbReference>
<dbReference type="RefSeq" id="WP_011616009.1">
    <property type="nucleotide sequence ID" value="NC_008313.1"/>
</dbReference>
<dbReference type="SMR" id="Q0K705"/>
<dbReference type="STRING" id="381666.H16_A3141"/>
<dbReference type="KEGG" id="reh:H16_A3141"/>
<dbReference type="PATRIC" id="fig|381666.6.peg.3549"/>
<dbReference type="eggNOG" id="COG0289">
    <property type="taxonomic scope" value="Bacteria"/>
</dbReference>
<dbReference type="HOGENOM" id="CLU_047479_2_1_4"/>
<dbReference type="OrthoDB" id="9790352at2"/>
<dbReference type="UniPathway" id="UPA00034">
    <property type="reaction ID" value="UER00018"/>
</dbReference>
<dbReference type="Proteomes" id="UP000008210">
    <property type="component" value="Chromosome 1"/>
</dbReference>
<dbReference type="GO" id="GO:0005829">
    <property type="term" value="C:cytosol"/>
    <property type="evidence" value="ECO:0007669"/>
    <property type="project" value="TreeGrafter"/>
</dbReference>
<dbReference type="GO" id="GO:0008839">
    <property type="term" value="F:4-hydroxy-tetrahydrodipicolinate reductase"/>
    <property type="evidence" value="ECO:0007669"/>
    <property type="project" value="UniProtKB-EC"/>
</dbReference>
<dbReference type="GO" id="GO:0051287">
    <property type="term" value="F:NAD binding"/>
    <property type="evidence" value="ECO:0007669"/>
    <property type="project" value="UniProtKB-UniRule"/>
</dbReference>
<dbReference type="GO" id="GO:0050661">
    <property type="term" value="F:NADP binding"/>
    <property type="evidence" value="ECO:0007669"/>
    <property type="project" value="UniProtKB-UniRule"/>
</dbReference>
<dbReference type="GO" id="GO:0016726">
    <property type="term" value="F:oxidoreductase activity, acting on CH or CH2 groups, NAD or NADP as acceptor"/>
    <property type="evidence" value="ECO:0007669"/>
    <property type="project" value="UniProtKB-UniRule"/>
</dbReference>
<dbReference type="GO" id="GO:0019877">
    <property type="term" value="P:diaminopimelate biosynthetic process"/>
    <property type="evidence" value="ECO:0007669"/>
    <property type="project" value="UniProtKB-UniRule"/>
</dbReference>
<dbReference type="GO" id="GO:0009089">
    <property type="term" value="P:lysine biosynthetic process via diaminopimelate"/>
    <property type="evidence" value="ECO:0007669"/>
    <property type="project" value="UniProtKB-UniRule"/>
</dbReference>
<dbReference type="CDD" id="cd02274">
    <property type="entry name" value="DHDPR_N"/>
    <property type="match status" value="1"/>
</dbReference>
<dbReference type="FunFam" id="3.30.360.10:FF:000004">
    <property type="entry name" value="4-hydroxy-tetrahydrodipicolinate reductase"/>
    <property type="match status" value="1"/>
</dbReference>
<dbReference type="FunFam" id="3.40.50.720:FF:000048">
    <property type="entry name" value="4-hydroxy-tetrahydrodipicolinate reductase"/>
    <property type="match status" value="1"/>
</dbReference>
<dbReference type="Gene3D" id="3.30.360.10">
    <property type="entry name" value="Dihydrodipicolinate Reductase, domain 2"/>
    <property type="match status" value="1"/>
</dbReference>
<dbReference type="Gene3D" id="3.40.50.720">
    <property type="entry name" value="NAD(P)-binding Rossmann-like Domain"/>
    <property type="match status" value="1"/>
</dbReference>
<dbReference type="HAMAP" id="MF_00102">
    <property type="entry name" value="DapB"/>
    <property type="match status" value="1"/>
</dbReference>
<dbReference type="InterPro" id="IPR022663">
    <property type="entry name" value="DapB_C"/>
</dbReference>
<dbReference type="InterPro" id="IPR000846">
    <property type="entry name" value="DapB_N"/>
</dbReference>
<dbReference type="InterPro" id="IPR022664">
    <property type="entry name" value="DapB_N_CS"/>
</dbReference>
<dbReference type="InterPro" id="IPR023940">
    <property type="entry name" value="DHDPR_bac"/>
</dbReference>
<dbReference type="InterPro" id="IPR036291">
    <property type="entry name" value="NAD(P)-bd_dom_sf"/>
</dbReference>
<dbReference type="NCBIfam" id="TIGR00036">
    <property type="entry name" value="dapB"/>
    <property type="match status" value="1"/>
</dbReference>
<dbReference type="PANTHER" id="PTHR20836:SF0">
    <property type="entry name" value="4-HYDROXY-TETRAHYDRODIPICOLINATE REDUCTASE 1, CHLOROPLASTIC-RELATED"/>
    <property type="match status" value="1"/>
</dbReference>
<dbReference type="PANTHER" id="PTHR20836">
    <property type="entry name" value="DIHYDRODIPICOLINATE REDUCTASE"/>
    <property type="match status" value="1"/>
</dbReference>
<dbReference type="Pfam" id="PF05173">
    <property type="entry name" value="DapB_C"/>
    <property type="match status" value="1"/>
</dbReference>
<dbReference type="Pfam" id="PF01113">
    <property type="entry name" value="DapB_N"/>
    <property type="match status" value="1"/>
</dbReference>
<dbReference type="PIRSF" id="PIRSF000161">
    <property type="entry name" value="DHPR"/>
    <property type="match status" value="1"/>
</dbReference>
<dbReference type="SUPFAM" id="SSF55347">
    <property type="entry name" value="Glyceraldehyde-3-phosphate dehydrogenase-like, C-terminal domain"/>
    <property type="match status" value="1"/>
</dbReference>
<dbReference type="SUPFAM" id="SSF51735">
    <property type="entry name" value="NAD(P)-binding Rossmann-fold domains"/>
    <property type="match status" value="1"/>
</dbReference>
<dbReference type="PROSITE" id="PS01298">
    <property type="entry name" value="DAPB"/>
    <property type="match status" value="1"/>
</dbReference>
<organism>
    <name type="scientific">Cupriavidus necator (strain ATCC 17699 / DSM 428 / KCTC 22496 / NCIMB 10442 / H16 / Stanier 337)</name>
    <name type="common">Ralstonia eutropha</name>
    <dbReference type="NCBI Taxonomy" id="381666"/>
    <lineage>
        <taxon>Bacteria</taxon>
        <taxon>Pseudomonadati</taxon>
        <taxon>Pseudomonadota</taxon>
        <taxon>Betaproteobacteria</taxon>
        <taxon>Burkholderiales</taxon>
        <taxon>Burkholderiaceae</taxon>
        <taxon>Cupriavidus</taxon>
    </lineage>
</organism>
<keyword id="KW-0028">Amino-acid biosynthesis</keyword>
<keyword id="KW-0963">Cytoplasm</keyword>
<keyword id="KW-0220">Diaminopimelate biosynthesis</keyword>
<keyword id="KW-0457">Lysine biosynthesis</keyword>
<keyword id="KW-0520">NAD</keyword>
<keyword id="KW-0521">NADP</keyword>
<keyword id="KW-0560">Oxidoreductase</keyword>
<keyword id="KW-1185">Reference proteome</keyword>